<organism>
    <name type="scientific">Mycobacterium tuberculosis (strain CDC 1551 / Oshkosh)</name>
    <dbReference type="NCBI Taxonomy" id="83331"/>
    <lineage>
        <taxon>Bacteria</taxon>
        <taxon>Bacillati</taxon>
        <taxon>Actinomycetota</taxon>
        <taxon>Actinomycetes</taxon>
        <taxon>Mycobacteriales</taxon>
        <taxon>Mycobacteriaceae</taxon>
        <taxon>Mycobacterium</taxon>
        <taxon>Mycobacterium tuberculosis complex</taxon>
    </lineage>
</organism>
<dbReference type="EMBL" id="AE000516">
    <property type="status" value="NOT_ANNOTATED_CDS"/>
    <property type="molecule type" value="Genomic_DNA"/>
</dbReference>
<dbReference type="PIR" id="C70746">
    <property type="entry name" value="C70746"/>
</dbReference>
<dbReference type="RefSeq" id="WP_003402626.1">
    <property type="nucleotide sequence ID" value="NZ_KK341227.1"/>
</dbReference>
<dbReference type="SMR" id="P9WFK2"/>
<dbReference type="PATRIC" id="fig|83331.31.peg.556"/>
<dbReference type="Proteomes" id="UP000001020">
    <property type="component" value="Chromosome"/>
</dbReference>
<dbReference type="GO" id="GO:0019171">
    <property type="term" value="F:(3R)-hydroxyacyl-[acyl-carrier-protein] dehydratase activity"/>
    <property type="evidence" value="ECO:0007669"/>
    <property type="project" value="TreeGrafter"/>
</dbReference>
<dbReference type="GO" id="GO:0006633">
    <property type="term" value="P:fatty acid biosynthetic process"/>
    <property type="evidence" value="ECO:0007669"/>
    <property type="project" value="TreeGrafter"/>
</dbReference>
<dbReference type="CDD" id="cd03441">
    <property type="entry name" value="R_hydratase_like"/>
    <property type="match status" value="1"/>
</dbReference>
<dbReference type="Gene3D" id="3.10.129.10">
    <property type="entry name" value="Hotdog Thioesterase"/>
    <property type="match status" value="1"/>
</dbReference>
<dbReference type="HAMAP" id="MF_00799">
    <property type="entry name" value="UPF0336"/>
    <property type="match status" value="1"/>
</dbReference>
<dbReference type="InterPro" id="IPR039569">
    <property type="entry name" value="FAS1-like_DH_region"/>
</dbReference>
<dbReference type="InterPro" id="IPR016709">
    <property type="entry name" value="HadA-like"/>
</dbReference>
<dbReference type="InterPro" id="IPR029069">
    <property type="entry name" value="HotDog_dom_sf"/>
</dbReference>
<dbReference type="InterPro" id="IPR050965">
    <property type="entry name" value="UPF0336/Enoyl-CoA_hydratase"/>
</dbReference>
<dbReference type="PANTHER" id="PTHR43437:SF3">
    <property type="entry name" value="HYDROXYACYL-THIOESTER DEHYDRATASE TYPE 2, MITOCHONDRIAL"/>
    <property type="match status" value="1"/>
</dbReference>
<dbReference type="PANTHER" id="PTHR43437">
    <property type="entry name" value="HYDROXYACYL-THIOESTER DEHYDRATASE TYPE 2, MITOCHONDRIAL-RELATED"/>
    <property type="match status" value="1"/>
</dbReference>
<dbReference type="Pfam" id="PF13452">
    <property type="entry name" value="FAS1_DH_region"/>
    <property type="match status" value="1"/>
</dbReference>
<dbReference type="PIRSF" id="PIRSF018072">
    <property type="entry name" value="UCP018072"/>
    <property type="match status" value="1"/>
</dbReference>
<dbReference type="SUPFAM" id="SSF54637">
    <property type="entry name" value="Thioesterase/thiol ester dehydrase-isomerase"/>
    <property type="match status" value="1"/>
</dbReference>
<keyword id="KW-1185">Reference proteome</keyword>
<feature type="chain" id="PRO_0000428524" description="UPF0336 protein MT0525.1">
    <location>
        <begin position="1"/>
        <end position="166"/>
    </location>
</feature>
<feature type="domain" description="MaoC-like">
    <location>
        <begin position="8"/>
        <end position="131"/>
    </location>
</feature>
<evidence type="ECO:0000305" key="1"/>
<protein>
    <recommendedName>
        <fullName>UPF0336 protein MT0525.1</fullName>
    </recommendedName>
</protein>
<sequence length="166" mass="18360">MTVPEEAQTLIGKHYRAPDHFLVGREKIREFAVAVKDDHPTHYSEPDAAAAGYPALVAPLTFLAIAGRRVQLEIFTKFNIPINIARVFHRDQKFRFHRPILANDKLYFDTYLDSVIESHGTVLAEIRSEVTDAEGKPVVTSVVTMLGEAAHHEADADATVAAIASI</sequence>
<accession>P9WFK2</accession>
<accession>L0T3Y8</accession>
<accession>P64725</accession>
<accession>Q11168</accession>
<proteinExistence type="inferred from homology"/>
<comment type="similarity">
    <text evidence="1">Belongs to the UPF0336 family.</text>
</comment>
<gene>
    <name type="ordered locus">MT0525.1</name>
</gene>
<name>Y504_MYCTO</name>
<reference key="1">
    <citation type="journal article" date="2002" name="J. Bacteriol.">
        <title>Whole-genome comparison of Mycobacterium tuberculosis clinical and laboratory strains.</title>
        <authorList>
            <person name="Fleischmann R.D."/>
            <person name="Alland D."/>
            <person name="Eisen J.A."/>
            <person name="Carpenter L."/>
            <person name="White O."/>
            <person name="Peterson J.D."/>
            <person name="DeBoy R.T."/>
            <person name="Dodson R.J."/>
            <person name="Gwinn M.L."/>
            <person name="Haft D.H."/>
            <person name="Hickey E.K."/>
            <person name="Kolonay J.F."/>
            <person name="Nelson W.C."/>
            <person name="Umayam L.A."/>
            <person name="Ermolaeva M.D."/>
            <person name="Salzberg S.L."/>
            <person name="Delcher A."/>
            <person name="Utterback T.R."/>
            <person name="Weidman J.F."/>
            <person name="Khouri H.M."/>
            <person name="Gill J."/>
            <person name="Mikula A."/>
            <person name="Bishai W."/>
            <person name="Jacobs W.R. Jr."/>
            <person name="Venter J.C."/>
            <person name="Fraser C.M."/>
        </authorList>
    </citation>
    <scope>NUCLEOTIDE SEQUENCE [LARGE SCALE GENOMIC DNA]</scope>
    <source>
        <strain>CDC 1551 / Oshkosh</strain>
    </source>
</reference>